<proteinExistence type="evidence at transcript level"/>
<gene>
    <name evidence="6" type="primary">tmco1</name>
</gene>
<comment type="function">
    <text evidence="2 5">Calcium-selective channel required to prevent calcium stores from overfilling, thereby playing a key role in calcium homeostasis (PubMed:27212239). In response to endoplasmic reticulum (ER) overloading, assembles into a homotetramer, forming a functional calcium-selective channel, regulating the calcium content in endoplasmic reticulum store (By similarity). Component of the multi-pass translocon (MPT) complex that mediates insertion of multi-pass membrane proteins into the lipid bilayer of membranes (By similarity).</text>
</comment>
<comment type="subunit">
    <text evidence="2">Homodimer and homotetramer. Component of the multi-pass translocon (MPT) complex.</text>
</comment>
<comment type="subcellular location">
    <subcellularLocation>
        <location evidence="2">Endoplasmic reticulum membrane</location>
        <topology evidence="2">Multi-pass membrane protein</topology>
    </subcellularLocation>
    <subcellularLocation>
        <location evidence="2">Golgi apparatus membrane</location>
        <topology evidence="2">Multi-pass membrane protein</topology>
    </subcellularLocation>
    <text evidence="2">The first transmembrane region is required for localization to the endoplasmic reticulum.</text>
</comment>
<comment type="alternative products">
    <event type="alternative splicing"/>
    <isoform>
        <id>Q6DGW9-1</id>
        <name>1</name>
        <sequence type="displayed"/>
    </isoform>
    <isoform>
        <id>Q6DGW9-2</id>
        <name>2</name>
        <sequence type="described" ref="VSP_058496"/>
    </isoform>
</comment>
<comment type="similarity">
    <text evidence="4">Belongs to the TMCO1 family.</text>
</comment>
<name>TMCO1_DANRE</name>
<dbReference type="EMBL" id="BX927144">
    <property type="status" value="NOT_ANNOTATED_CDS"/>
    <property type="molecule type" value="Genomic_DNA"/>
</dbReference>
<dbReference type="EMBL" id="BC076218">
    <property type="protein sequence ID" value="AAH76218.1"/>
    <property type="molecule type" value="mRNA"/>
</dbReference>
<dbReference type="EMBL" id="BC092873">
    <property type="protein sequence ID" value="AAH92873.1"/>
    <property type="molecule type" value="mRNA"/>
</dbReference>
<dbReference type="EMBL" id="BC152265">
    <property type="protein sequence ID" value="AAI52266.1"/>
    <property type="molecule type" value="mRNA"/>
</dbReference>
<dbReference type="EMBL" id="BC153441">
    <property type="protein sequence ID" value="AAI53442.1"/>
    <property type="molecule type" value="mRNA"/>
</dbReference>
<dbReference type="EMBL" id="BC164974">
    <property type="protein sequence ID" value="AAI64974.1"/>
    <property type="molecule type" value="mRNA"/>
</dbReference>
<dbReference type="RefSeq" id="NP_001002575.1">
    <molecule id="Q6DGW9-1"/>
    <property type="nucleotide sequence ID" value="NM_001002575.1"/>
</dbReference>
<dbReference type="SMR" id="Q6DGW9"/>
<dbReference type="FunCoup" id="Q6DGW9">
    <property type="interactions" value="1285"/>
</dbReference>
<dbReference type="STRING" id="7955.ENSDARP00000091049"/>
<dbReference type="PaxDb" id="7955-ENSDARP00000091049"/>
<dbReference type="Ensembl" id="ENSDART00000100276">
    <molecule id="Q6DGW9-1"/>
    <property type="protein sequence ID" value="ENSDARP00000091049"/>
    <property type="gene ID" value="ENSDARG00000069099"/>
</dbReference>
<dbReference type="GeneID" id="378980"/>
<dbReference type="KEGG" id="dre:378980"/>
<dbReference type="AGR" id="ZFIN:ZDB-GENE-050417-344"/>
<dbReference type="CTD" id="54499"/>
<dbReference type="ZFIN" id="ZDB-GENE-050417-344">
    <property type="gene designation" value="tmco1"/>
</dbReference>
<dbReference type="eggNOG" id="KOG3312">
    <property type="taxonomic scope" value="Eukaryota"/>
</dbReference>
<dbReference type="HOGENOM" id="CLU_081121_0_0_1"/>
<dbReference type="InParanoid" id="Q6DGW9"/>
<dbReference type="OMA" id="CSISIRM"/>
<dbReference type="OrthoDB" id="342726at2759"/>
<dbReference type="PhylomeDB" id="Q6DGW9"/>
<dbReference type="TreeFam" id="TF315045"/>
<dbReference type="PRO" id="PR:Q6DGW9"/>
<dbReference type="Proteomes" id="UP000000437">
    <property type="component" value="Alternate scaffold 8"/>
</dbReference>
<dbReference type="Proteomes" id="UP000000437">
    <property type="component" value="Chromosome 8"/>
</dbReference>
<dbReference type="Bgee" id="ENSDARG00000069099">
    <property type="expression patterns" value="Expressed in early embryo and 30 other cell types or tissues"/>
</dbReference>
<dbReference type="GO" id="GO:0005737">
    <property type="term" value="C:cytoplasm"/>
    <property type="evidence" value="ECO:0000318"/>
    <property type="project" value="GO_Central"/>
</dbReference>
<dbReference type="GO" id="GO:0005783">
    <property type="term" value="C:endoplasmic reticulum"/>
    <property type="evidence" value="ECO:0000318"/>
    <property type="project" value="GO_Central"/>
</dbReference>
<dbReference type="GO" id="GO:0005789">
    <property type="term" value="C:endoplasmic reticulum membrane"/>
    <property type="evidence" value="ECO:0000250"/>
    <property type="project" value="UniProtKB"/>
</dbReference>
<dbReference type="GO" id="GO:0000139">
    <property type="term" value="C:Golgi membrane"/>
    <property type="evidence" value="ECO:0007669"/>
    <property type="project" value="UniProtKB-SubCell"/>
</dbReference>
<dbReference type="GO" id="GO:0160064">
    <property type="term" value="C:multi-pass translocon complex"/>
    <property type="evidence" value="ECO:0000250"/>
    <property type="project" value="UniProtKB"/>
</dbReference>
<dbReference type="GO" id="GO:0005262">
    <property type="term" value="F:calcium channel activity"/>
    <property type="evidence" value="ECO:0000250"/>
    <property type="project" value="UniProtKB"/>
</dbReference>
<dbReference type="GO" id="GO:0043022">
    <property type="term" value="F:ribosome binding"/>
    <property type="evidence" value="ECO:0000250"/>
    <property type="project" value="UniProtKB"/>
</dbReference>
<dbReference type="GO" id="GO:0070588">
    <property type="term" value="P:calcium ion transmembrane transport"/>
    <property type="evidence" value="ECO:0000314"/>
    <property type="project" value="UniProtKB"/>
</dbReference>
<dbReference type="GO" id="GO:0032469">
    <property type="term" value="P:endoplasmic reticulum calcium ion homeostasis"/>
    <property type="evidence" value="ECO:0000314"/>
    <property type="project" value="UniProtKB"/>
</dbReference>
<dbReference type="GO" id="GO:0006983">
    <property type="term" value="P:ER overload response"/>
    <property type="evidence" value="ECO:0000250"/>
    <property type="project" value="UniProtKB"/>
</dbReference>
<dbReference type="GO" id="GO:0160063">
    <property type="term" value="P:multi-pass transmembrane protein insertion into ER membrane"/>
    <property type="evidence" value="ECO:0000250"/>
    <property type="project" value="UniProtKB"/>
</dbReference>
<dbReference type="InterPro" id="IPR002809">
    <property type="entry name" value="EMC3/TMCO1"/>
</dbReference>
<dbReference type="InterPro" id="IPR008559">
    <property type="entry name" value="TMCO1"/>
</dbReference>
<dbReference type="PANTHER" id="PTHR20917:SF0">
    <property type="entry name" value="CALCIUM LOAD-ACTIVATED CALCIUM CHANNEL"/>
    <property type="match status" value="1"/>
</dbReference>
<dbReference type="PANTHER" id="PTHR20917">
    <property type="entry name" value="PNAS-RELATED"/>
    <property type="match status" value="1"/>
</dbReference>
<dbReference type="Pfam" id="PF01956">
    <property type="entry name" value="EMC3_TMCO1"/>
    <property type="match status" value="1"/>
</dbReference>
<dbReference type="PIRSF" id="PIRSF023322">
    <property type="entry name" value="DUF841_euk"/>
    <property type="match status" value="1"/>
</dbReference>
<dbReference type="SMART" id="SM01415">
    <property type="entry name" value="DUF106"/>
    <property type="match status" value="1"/>
</dbReference>
<feature type="chain" id="PRO_0000437215" description="Calcium load-activated calcium channel">
    <location>
        <begin position="1"/>
        <end position="188"/>
    </location>
</feature>
<feature type="topological domain" description="Lumenal" evidence="4">
    <location>
        <begin position="1"/>
        <end position="4"/>
    </location>
</feature>
<feature type="transmembrane region" description="Helical" evidence="1">
    <location>
        <begin position="5"/>
        <end position="32"/>
    </location>
</feature>
<feature type="topological domain" description="Cytoplasmic" evidence="4">
    <location>
        <begin position="33"/>
        <end position="86"/>
    </location>
</feature>
<feature type="transmembrane region" description="Helical" evidence="1">
    <location>
        <begin position="87"/>
        <end position="106"/>
    </location>
</feature>
<feature type="topological domain" description="Lumenal" evidence="4">
    <location>
        <begin position="107"/>
        <end position="120"/>
    </location>
</feature>
<feature type="intramembrane region" evidence="1">
    <location>
        <begin position="121"/>
        <end position="130"/>
    </location>
</feature>
<feature type="topological domain" description="Lumenal" evidence="4">
    <location>
        <begin position="131"/>
        <end position="140"/>
    </location>
</feature>
<feature type="transmembrane region" description="Helical" evidence="1">
    <location>
        <begin position="141"/>
        <end position="162"/>
    </location>
</feature>
<feature type="topological domain" description="Cytoplasmic" evidence="4">
    <location>
        <begin position="163"/>
        <end position="188"/>
    </location>
</feature>
<feature type="coiled-coil region" evidence="3">
    <location>
        <begin position="32"/>
        <end position="89"/>
    </location>
</feature>
<feature type="splice variant" id="VSP_058496" description="In isoform 2.">
    <original>MSTMFADTILIVFISICTALLAE</original>
    <variation>MQDKYSSKAALQFVSLCFT</variation>
    <location>
        <begin position="1"/>
        <end position="23"/>
    </location>
</feature>
<feature type="sequence conflict" description="In Ref. 2; AAI53442." evidence="4" ref="2">
    <original>D</original>
    <variation>G</variation>
    <location>
        <position position="34"/>
    </location>
</feature>
<feature type="sequence conflict" description="In Ref. 2; AAI53442." evidence="4" ref="2">
    <original>R</original>
    <variation>G</variation>
    <location>
        <position position="71"/>
    </location>
</feature>
<feature type="sequence conflict" description="In Ref. 2; AAH92873/AAI64974." evidence="4" ref="2">
    <original>A</original>
    <variation>S</variation>
    <location sequence="Q6DGW9-2">
        <position position="9"/>
    </location>
</feature>
<evidence type="ECO:0000250" key="1">
    <source>
        <dbReference type="UniProtKB" id="A0A8I3PI99"/>
    </source>
</evidence>
<evidence type="ECO:0000250" key="2">
    <source>
        <dbReference type="UniProtKB" id="Q9UM00"/>
    </source>
</evidence>
<evidence type="ECO:0000255" key="3"/>
<evidence type="ECO:0000305" key="4"/>
<evidence type="ECO:0000305" key="5">
    <source>
    </source>
</evidence>
<evidence type="ECO:0000312" key="6">
    <source>
        <dbReference type="ZFIN" id="ZDB-GENE-050417-344"/>
    </source>
</evidence>
<sequence>MSTMFADTILIVFISICTALLAEGITWVLVYRTDKYKRLKAEVEKQSKKLEKKKETITESAGRQQKKKIERQEEKLKNNNRDLSMVRMKSMFAIGFCFTALMGMFNSIFDGRVVAKLPFVPLSYIQGLSHRNLLGEDYTDCSFIFLYILCTMSIRQNIQKMLGLAPSRAATKQAGGFLGPPPQAAKFS</sequence>
<accession>Q6DGW9</accession>
<accession>A8E529</accession>
<accession>B0S7X3</accession>
<accession>Q568F9</accession>
<organism>
    <name type="scientific">Danio rerio</name>
    <name type="common">Zebrafish</name>
    <name type="synonym">Brachydanio rerio</name>
    <dbReference type="NCBI Taxonomy" id="7955"/>
    <lineage>
        <taxon>Eukaryota</taxon>
        <taxon>Metazoa</taxon>
        <taxon>Chordata</taxon>
        <taxon>Craniata</taxon>
        <taxon>Vertebrata</taxon>
        <taxon>Euteleostomi</taxon>
        <taxon>Actinopterygii</taxon>
        <taxon>Neopterygii</taxon>
        <taxon>Teleostei</taxon>
        <taxon>Ostariophysi</taxon>
        <taxon>Cypriniformes</taxon>
        <taxon>Danionidae</taxon>
        <taxon>Danioninae</taxon>
        <taxon>Danio</taxon>
    </lineage>
</organism>
<reference key="1">
    <citation type="journal article" date="2013" name="Nature">
        <title>The zebrafish reference genome sequence and its relationship to the human genome.</title>
        <authorList>
            <person name="Howe K."/>
            <person name="Clark M.D."/>
            <person name="Torroja C.F."/>
            <person name="Torrance J."/>
            <person name="Berthelot C."/>
            <person name="Muffato M."/>
            <person name="Collins J.E."/>
            <person name="Humphray S."/>
            <person name="McLaren K."/>
            <person name="Matthews L."/>
            <person name="McLaren S."/>
            <person name="Sealy I."/>
            <person name="Caccamo M."/>
            <person name="Churcher C."/>
            <person name="Scott C."/>
            <person name="Barrett J.C."/>
            <person name="Koch R."/>
            <person name="Rauch G.J."/>
            <person name="White S."/>
            <person name="Chow W."/>
            <person name="Kilian B."/>
            <person name="Quintais L.T."/>
            <person name="Guerra-Assuncao J.A."/>
            <person name="Zhou Y."/>
            <person name="Gu Y."/>
            <person name="Yen J."/>
            <person name="Vogel J.H."/>
            <person name="Eyre T."/>
            <person name="Redmond S."/>
            <person name="Banerjee R."/>
            <person name="Chi J."/>
            <person name="Fu B."/>
            <person name="Langley E."/>
            <person name="Maguire S.F."/>
            <person name="Laird G.K."/>
            <person name="Lloyd D."/>
            <person name="Kenyon E."/>
            <person name="Donaldson S."/>
            <person name="Sehra H."/>
            <person name="Almeida-King J."/>
            <person name="Loveland J."/>
            <person name="Trevanion S."/>
            <person name="Jones M."/>
            <person name="Quail M."/>
            <person name="Willey D."/>
            <person name="Hunt A."/>
            <person name="Burton J."/>
            <person name="Sims S."/>
            <person name="McLay K."/>
            <person name="Plumb B."/>
            <person name="Davis J."/>
            <person name="Clee C."/>
            <person name="Oliver K."/>
            <person name="Clark R."/>
            <person name="Riddle C."/>
            <person name="Elliot D."/>
            <person name="Threadgold G."/>
            <person name="Harden G."/>
            <person name="Ware D."/>
            <person name="Begum S."/>
            <person name="Mortimore B."/>
            <person name="Kerry G."/>
            <person name="Heath P."/>
            <person name="Phillimore B."/>
            <person name="Tracey A."/>
            <person name="Corby N."/>
            <person name="Dunn M."/>
            <person name="Johnson C."/>
            <person name="Wood J."/>
            <person name="Clark S."/>
            <person name="Pelan S."/>
            <person name="Griffiths G."/>
            <person name="Smith M."/>
            <person name="Glithero R."/>
            <person name="Howden P."/>
            <person name="Barker N."/>
            <person name="Lloyd C."/>
            <person name="Stevens C."/>
            <person name="Harley J."/>
            <person name="Holt K."/>
            <person name="Panagiotidis G."/>
            <person name="Lovell J."/>
            <person name="Beasley H."/>
            <person name="Henderson C."/>
            <person name="Gordon D."/>
            <person name="Auger K."/>
            <person name="Wright D."/>
            <person name="Collins J."/>
            <person name="Raisen C."/>
            <person name="Dyer L."/>
            <person name="Leung K."/>
            <person name="Robertson L."/>
            <person name="Ambridge K."/>
            <person name="Leongamornlert D."/>
            <person name="McGuire S."/>
            <person name="Gilderthorp R."/>
            <person name="Griffiths C."/>
            <person name="Manthravadi D."/>
            <person name="Nichol S."/>
            <person name="Barker G."/>
            <person name="Whitehead S."/>
            <person name="Kay M."/>
            <person name="Brown J."/>
            <person name="Murnane C."/>
            <person name="Gray E."/>
            <person name="Humphries M."/>
            <person name="Sycamore N."/>
            <person name="Barker D."/>
            <person name="Saunders D."/>
            <person name="Wallis J."/>
            <person name="Babbage A."/>
            <person name="Hammond S."/>
            <person name="Mashreghi-Mohammadi M."/>
            <person name="Barr L."/>
            <person name="Martin S."/>
            <person name="Wray P."/>
            <person name="Ellington A."/>
            <person name="Matthews N."/>
            <person name="Ellwood M."/>
            <person name="Woodmansey R."/>
            <person name="Clark G."/>
            <person name="Cooper J."/>
            <person name="Tromans A."/>
            <person name="Grafham D."/>
            <person name="Skuce C."/>
            <person name="Pandian R."/>
            <person name="Andrews R."/>
            <person name="Harrison E."/>
            <person name="Kimberley A."/>
            <person name="Garnett J."/>
            <person name="Fosker N."/>
            <person name="Hall R."/>
            <person name="Garner P."/>
            <person name="Kelly D."/>
            <person name="Bird C."/>
            <person name="Palmer S."/>
            <person name="Gehring I."/>
            <person name="Berger A."/>
            <person name="Dooley C.M."/>
            <person name="Ersan-Urun Z."/>
            <person name="Eser C."/>
            <person name="Geiger H."/>
            <person name="Geisler M."/>
            <person name="Karotki L."/>
            <person name="Kirn A."/>
            <person name="Konantz J."/>
            <person name="Konantz M."/>
            <person name="Oberlander M."/>
            <person name="Rudolph-Geiger S."/>
            <person name="Teucke M."/>
            <person name="Lanz C."/>
            <person name="Raddatz G."/>
            <person name="Osoegawa K."/>
            <person name="Zhu B."/>
            <person name="Rapp A."/>
            <person name="Widaa S."/>
            <person name="Langford C."/>
            <person name="Yang F."/>
            <person name="Schuster S.C."/>
            <person name="Carter N.P."/>
            <person name="Harrow J."/>
            <person name="Ning Z."/>
            <person name="Herrero J."/>
            <person name="Searle S.M."/>
            <person name="Enright A."/>
            <person name="Geisler R."/>
            <person name="Plasterk R.H."/>
            <person name="Lee C."/>
            <person name="Westerfield M."/>
            <person name="de Jong P.J."/>
            <person name="Zon L.I."/>
            <person name="Postlethwait J.H."/>
            <person name="Nusslein-Volhard C."/>
            <person name="Hubbard T.J."/>
            <person name="Roest Crollius H."/>
            <person name="Rogers J."/>
            <person name="Stemple D.L."/>
        </authorList>
    </citation>
    <scope>NUCLEOTIDE SEQUENCE [LARGE SCALE GENOMIC DNA]</scope>
    <source>
        <strain>Tuebingen</strain>
    </source>
</reference>
<reference key="2">
    <citation type="submission" date="2004-07" db="EMBL/GenBank/DDBJ databases">
        <authorList>
            <consortium name="NIH - Zebrafish Gene Collection (ZGC) project"/>
        </authorList>
    </citation>
    <scope>NUCLEOTIDE SEQUENCE [LARGE SCALE MRNA]</scope>
    <source>
        <tissue>Embryo</tissue>
        <tissue>Liver</tissue>
        <tissue>Olfactory epithelium</tissue>
    </source>
</reference>
<reference key="3">
    <citation type="journal article" date="2016" name="Cell">
        <title>TMCO1 is an ER Ca(2+) load-activated Ca(2+) channel.</title>
        <authorList>
            <person name="Wang Q.C."/>
            <person name="Zheng Q."/>
            <person name="Tan H."/>
            <person name="Zhang B."/>
            <person name="Li X."/>
            <person name="Yang Y."/>
            <person name="Yu J."/>
            <person name="Liu Y."/>
            <person name="Chai H."/>
            <person name="Wang X."/>
            <person name="Sun Z."/>
            <person name="Wang J.Q."/>
            <person name="Zhu S."/>
            <person name="Wang F."/>
            <person name="Yang M."/>
            <person name="Guo C."/>
            <person name="Wang H."/>
            <person name="Zheng Q."/>
            <person name="Li Y."/>
            <person name="Chen Q."/>
            <person name="Zhou A."/>
            <person name="Tang T.S."/>
        </authorList>
    </citation>
    <scope>FUNCTION</scope>
</reference>
<protein>
    <recommendedName>
        <fullName evidence="2">Calcium load-activated calcium channel</fullName>
        <shortName evidence="2">CLAC channel</shortName>
    </recommendedName>
    <alternativeName>
        <fullName evidence="4">GEL complex subunit TMCO1</fullName>
    </alternativeName>
    <alternativeName>
        <fullName evidence="2">Transmembrane and coiled-coil domain-containing protein 1</fullName>
    </alternativeName>
</protein>
<keyword id="KW-0025">Alternative splicing</keyword>
<keyword id="KW-0106">Calcium</keyword>
<keyword id="KW-0107">Calcium channel</keyword>
<keyword id="KW-0109">Calcium transport</keyword>
<keyword id="KW-0175">Coiled coil</keyword>
<keyword id="KW-0256">Endoplasmic reticulum</keyword>
<keyword id="KW-0333">Golgi apparatus</keyword>
<keyword id="KW-0407">Ion channel</keyword>
<keyword id="KW-0406">Ion transport</keyword>
<keyword id="KW-0472">Membrane</keyword>
<keyword id="KW-1185">Reference proteome</keyword>
<keyword id="KW-0812">Transmembrane</keyword>
<keyword id="KW-1133">Transmembrane helix</keyword>
<keyword id="KW-0813">Transport</keyword>